<reference key="1">
    <citation type="journal article" date="2002" name="Nucleic Acids Res.">
        <title>The complete genomic sequence of Mycoplasma penetrans, an intracellular bacterial pathogen in humans.</title>
        <authorList>
            <person name="Sasaki Y."/>
            <person name="Ishikawa J."/>
            <person name="Yamashita A."/>
            <person name="Oshima K."/>
            <person name="Kenri T."/>
            <person name="Furuya K."/>
            <person name="Yoshino C."/>
            <person name="Horino A."/>
            <person name="Shiba T."/>
            <person name="Sasaki T."/>
            <person name="Hattori M."/>
        </authorList>
    </citation>
    <scope>NUCLEOTIDE SEQUENCE [LARGE SCALE GENOMIC DNA]</scope>
    <source>
        <strain>HF-2</strain>
    </source>
</reference>
<organism>
    <name type="scientific">Malacoplasma penetrans (strain HF-2)</name>
    <name type="common">Mycoplasma penetrans</name>
    <dbReference type="NCBI Taxonomy" id="272633"/>
    <lineage>
        <taxon>Bacteria</taxon>
        <taxon>Bacillati</taxon>
        <taxon>Mycoplasmatota</taxon>
        <taxon>Mycoplasmoidales</taxon>
        <taxon>Mycoplasmoidaceae</taxon>
        <taxon>Malacoplasma</taxon>
    </lineage>
</organism>
<accession>Q8EVD0</accession>
<name>GLPK_MALP2</name>
<gene>
    <name evidence="1" type="primary">glpK</name>
    <name type="ordered locus">MYPE6360</name>
</gene>
<evidence type="ECO:0000255" key="1">
    <source>
        <dbReference type="HAMAP-Rule" id="MF_00186"/>
    </source>
</evidence>
<proteinExistence type="inferred from homology"/>
<comment type="function">
    <text evidence="1">Key enzyme in the regulation of glycerol uptake and metabolism. Catalyzes the phosphorylation of glycerol to yield sn-glycerol 3-phosphate.</text>
</comment>
<comment type="catalytic activity">
    <reaction evidence="1">
        <text>glycerol + ATP = sn-glycerol 3-phosphate + ADP + H(+)</text>
        <dbReference type="Rhea" id="RHEA:21644"/>
        <dbReference type="ChEBI" id="CHEBI:15378"/>
        <dbReference type="ChEBI" id="CHEBI:17754"/>
        <dbReference type="ChEBI" id="CHEBI:30616"/>
        <dbReference type="ChEBI" id="CHEBI:57597"/>
        <dbReference type="ChEBI" id="CHEBI:456216"/>
        <dbReference type="EC" id="2.7.1.30"/>
    </reaction>
</comment>
<comment type="activity regulation">
    <text evidence="1">Inhibited by fructose 1,6-bisphosphate (FBP).</text>
</comment>
<comment type="pathway">
    <text evidence="1">Polyol metabolism; glycerol degradation via glycerol kinase pathway; sn-glycerol 3-phosphate from glycerol: step 1/1.</text>
</comment>
<comment type="similarity">
    <text evidence="1">Belongs to the FGGY kinase family.</text>
</comment>
<dbReference type="EC" id="2.7.1.30" evidence="1"/>
<dbReference type="EMBL" id="BA000026">
    <property type="protein sequence ID" value="BAC44426.1"/>
    <property type="molecule type" value="Genomic_DNA"/>
</dbReference>
<dbReference type="RefSeq" id="WP_011077456.1">
    <property type="nucleotide sequence ID" value="NC_004432.1"/>
</dbReference>
<dbReference type="SMR" id="Q8EVD0"/>
<dbReference type="FunCoup" id="Q8EVD0">
    <property type="interactions" value="175"/>
</dbReference>
<dbReference type="STRING" id="272633.gene:10731755"/>
<dbReference type="KEGG" id="mpe:MYPE6360"/>
<dbReference type="eggNOG" id="COG0554">
    <property type="taxonomic scope" value="Bacteria"/>
</dbReference>
<dbReference type="HOGENOM" id="CLU_009281_2_3_14"/>
<dbReference type="InParanoid" id="Q8EVD0"/>
<dbReference type="UniPathway" id="UPA00618">
    <property type="reaction ID" value="UER00672"/>
</dbReference>
<dbReference type="Proteomes" id="UP000002522">
    <property type="component" value="Chromosome"/>
</dbReference>
<dbReference type="GO" id="GO:0005829">
    <property type="term" value="C:cytosol"/>
    <property type="evidence" value="ECO:0007669"/>
    <property type="project" value="TreeGrafter"/>
</dbReference>
<dbReference type="GO" id="GO:0005524">
    <property type="term" value="F:ATP binding"/>
    <property type="evidence" value="ECO:0007669"/>
    <property type="project" value="UniProtKB-UniRule"/>
</dbReference>
<dbReference type="GO" id="GO:0004370">
    <property type="term" value="F:glycerol kinase activity"/>
    <property type="evidence" value="ECO:0000250"/>
    <property type="project" value="UniProtKB"/>
</dbReference>
<dbReference type="GO" id="GO:0019563">
    <property type="term" value="P:glycerol catabolic process"/>
    <property type="evidence" value="ECO:0007669"/>
    <property type="project" value="UniProtKB-UniRule"/>
</dbReference>
<dbReference type="GO" id="GO:0006071">
    <property type="term" value="P:glycerol metabolic process"/>
    <property type="evidence" value="ECO:0000250"/>
    <property type="project" value="UniProtKB"/>
</dbReference>
<dbReference type="GO" id="GO:0006072">
    <property type="term" value="P:glycerol-3-phosphate metabolic process"/>
    <property type="evidence" value="ECO:0007669"/>
    <property type="project" value="InterPro"/>
</dbReference>
<dbReference type="CDD" id="cd07786">
    <property type="entry name" value="FGGY_EcGK_like"/>
    <property type="match status" value="1"/>
</dbReference>
<dbReference type="FunFam" id="3.30.420.40:FF:000007">
    <property type="entry name" value="Glycerol kinase"/>
    <property type="match status" value="1"/>
</dbReference>
<dbReference type="FunFam" id="3.30.420.40:FF:000008">
    <property type="entry name" value="Glycerol kinase"/>
    <property type="match status" value="1"/>
</dbReference>
<dbReference type="Gene3D" id="3.30.420.40">
    <property type="match status" value="2"/>
</dbReference>
<dbReference type="HAMAP" id="MF_00186">
    <property type="entry name" value="Glycerol_kin"/>
    <property type="match status" value="1"/>
</dbReference>
<dbReference type="InterPro" id="IPR043129">
    <property type="entry name" value="ATPase_NBD"/>
</dbReference>
<dbReference type="InterPro" id="IPR000577">
    <property type="entry name" value="Carb_kinase_FGGY"/>
</dbReference>
<dbReference type="InterPro" id="IPR018483">
    <property type="entry name" value="Carb_kinase_FGGY_CS"/>
</dbReference>
<dbReference type="InterPro" id="IPR018485">
    <property type="entry name" value="FGGY_C"/>
</dbReference>
<dbReference type="InterPro" id="IPR018484">
    <property type="entry name" value="FGGY_N"/>
</dbReference>
<dbReference type="InterPro" id="IPR005999">
    <property type="entry name" value="Glycerol_kin"/>
</dbReference>
<dbReference type="NCBIfam" id="TIGR01311">
    <property type="entry name" value="glycerol_kin"/>
    <property type="match status" value="1"/>
</dbReference>
<dbReference type="NCBIfam" id="NF000756">
    <property type="entry name" value="PRK00047.1"/>
    <property type="match status" value="1"/>
</dbReference>
<dbReference type="PANTHER" id="PTHR10196:SF69">
    <property type="entry name" value="GLYCEROL KINASE"/>
    <property type="match status" value="1"/>
</dbReference>
<dbReference type="PANTHER" id="PTHR10196">
    <property type="entry name" value="SUGAR KINASE"/>
    <property type="match status" value="1"/>
</dbReference>
<dbReference type="Pfam" id="PF02782">
    <property type="entry name" value="FGGY_C"/>
    <property type="match status" value="1"/>
</dbReference>
<dbReference type="Pfam" id="PF00370">
    <property type="entry name" value="FGGY_N"/>
    <property type="match status" value="1"/>
</dbReference>
<dbReference type="PIRSF" id="PIRSF000538">
    <property type="entry name" value="GlpK"/>
    <property type="match status" value="1"/>
</dbReference>
<dbReference type="SUPFAM" id="SSF53067">
    <property type="entry name" value="Actin-like ATPase domain"/>
    <property type="match status" value="2"/>
</dbReference>
<dbReference type="PROSITE" id="PS00933">
    <property type="entry name" value="FGGY_KINASES_1"/>
    <property type="match status" value="1"/>
</dbReference>
<dbReference type="PROSITE" id="PS00445">
    <property type="entry name" value="FGGY_KINASES_2"/>
    <property type="match status" value="1"/>
</dbReference>
<feature type="chain" id="PRO_0000059469" description="Glycerol kinase">
    <location>
        <begin position="1"/>
        <end position="507"/>
    </location>
</feature>
<feature type="binding site" evidence="1">
    <location>
        <position position="15"/>
    </location>
    <ligand>
        <name>ADP</name>
        <dbReference type="ChEBI" id="CHEBI:456216"/>
    </ligand>
</feature>
<feature type="binding site" evidence="1">
    <location>
        <position position="15"/>
    </location>
    <ligand>
        <name>ATP</name>
        <dbReference type="ChEBI" id="CHEBI:30616"/>
    </ligand>
</feature>
<feature type="binding site" evidence="1">
    <location>
        <position position="15"/>
    </location>
    <ligand>
        <name>sn-glycerol 3-phosphate</name>
        <dbReference type="ChEBI" id="CHEBI:57597"/>
    </ligand>
</feature>
<feature type="binding site" evidence="1">
    <location>
        <position position="16"/>
    </location>
    <ligand>
        <name>ATP</name>
        <dbReference type="ChEBI" id="CHEBI:30616"/>
    </ligand>
</feature>
<feature type="binding site" evidence="1">
    <location>
        <position position="17"/>
    </location>
    <ligand>
        <name>ATP</name>
        <dbReference type="ChEBI" id="CHEBI:30616"/>
    </ligand>
</feature>
<feature type="binding site" evidence="1">
    <location>
        <position position="19"/>
    </location>
    <ligand>
        <name>ADP</name>
        <dbReference type="ChEBI" id="CHEBI:456216"/>
    </ligand>
</feature>
<feature type="binding site" evidence="1">
    <location>
        <position position="85"/>
    </location>
    <ligand>
        <name>glycerol</name>
        <dbReference type="ChEBI" id="CHEBI:17754"/>
    </ligand>
</feature>
<feature type="binding site" evidence="1">
    <location>
        <position position="85"/>
    </location>
    <ligand>
        <name>sn-glycerol 3-phosphate</name>
        <dbReference type="ChEBI" id="CHEBI:57597"/>
    </ligand>
</feature>
<feature type="binding site" evidence="1">
    <location>
        <position position="86"/>
    </location>
    <ligand>
        <name>glycerol</name>
        <dbReference type="ChEBI" id="CHEBI:17754"/>
    </ligand>
</feature>
<feature type="binding site" evidence="1">
    <location>
        <position position="86"/>
    </location>
    <ligand>
        <name>sn-glycerol 3-phosphate</name>
        <dbReference type="ChEBI" id="CHEBI:57597"/>
    </ligand>
</feature>
<feature type="binding site" evidence="1">
    <location>
        <position position="137"/>
    </location>
    <ligand>
        <name>glycerol</name>
        <dbReference type="ChEBI" id="CHEBI:17754"/>
    </ligand>
</feature>
<feature type="binding site" evidence="1">
    <location>
        <position position="137"/>
    </location>
    <ligand>
        <name>sn-glycerol 3-phosphate</name>
        <dbReference type="ChEBI" id="CHEBI:57597"/>
    </ligand>
</feature>
<feature type="binding site" evidence="1">
    <location>
        <position position="250"/>
    </location>
    <ligand>
        <name>glycerol</name>
        <dbReference type="ChEBI" id="CHEBI:17754"/>
    </ligand>
</feature>
<feature type="binding site" evidence="1">
    <location>
        <position position="250"/>
    </location>
    <ligand>
        <name>sn-glycerol 3-phosphate</name>
        <dbReference type="ChEBI" id="CHEBI:57597"/>
    </ligand>
</feature>
<feature type="binding site" evidence="1">
    <location>
        <position position="251"/>
    </location>
    <ligand>
        <name>glycerol</name>
        <dbReference type="ChEBI" id="CHEBI:17754"/>
    </ligand>
</feature>
<feature type="binding site" evidence="1">
    <location>
        <position position="272"/>
    </location>
    <ligand>
        <name>ADP</name>
        <dbReference type="ChEBI" id="CHEBI:456216"/>
    </ligand>
</feature>
<feature type="binding site" evidence="1">
    <location>
        <position position="272"/>
    </location>
    <ligand>
        <name>ATP</name>
        <dbReference type="ChEBI" id="CHEBI:30616"/>
    </ligand>
</feature>
<feature type="binding site" evidence="1">
    <location>
        <position position="316"/>
    </location>
    <ligand>
        <name>ADP</name>
        <dbReference type="ChEBI" id="CHEBI:456216"/>
    </ligand>
</feature>
<feature type="binding site" evidence="1">
    <location>
        <position position="316"/>
    </location>
    <ligand>
        <name>ATP</name>
        <dbReference type="ChEBI" id="CHEBI:30616"/>
    </ligand>
</feature>
<feature type="binding site" evidence="1">
    <location>
        <position position="418"/>
    </location>
    <ligand>
        <name>ADP</name>
        <dbReference type="ChEBI" id="CHEBI:456216"/>
    </ligand>
</feature>
<feature type="binding site" evidence="1">
    <location>
        <position position="418"/>
    </location>
    <ligand>
        <name>ATP</name>
        <dbReference type="ChEBI" id="CHEBI:30616"/>
    </ligand>
</feature>
<protein>
    <recommendedName>
        <fullName evidence="1">Glycerol kinase</fullName>
        <ecNumber evidence="1">2.7.1.30</ecNumber>
    </recommendedName>
    <alternativeName>
        <fullName evidence="1">ATP:glycerol 3-phosphotransferase</fullName>
    </alternativeName>
    <alternativeName>
        <fullName evidence="1">Glycerokinase</fullName>
        <shortName evidence="1">GK</shortName>
    </alternativeName>
</protein>
<keyword id="KW-0067">ATP-binding</keyword>
<keyword id="KW-0319">Glycerol metabolism</keyword>
<keyword id="KW-0418">Kinase</keyword>
<keyword id="KW-0547">Nucleotide-binding</keyword>
<keyword id="KW-1185">Reference proteome</keyword>
<keyword id="KW-0808">Transferase</keyword>
<sequence length="507" mass="56414">MDNTKKYIVSLDSGTTSCRTIIFDQNGNMVSSAQTEFTQYFPQSGWVEHDAIEIWTTQLGTLQSAKSRANIKSHNMAAIGITNQRETVVLWDKETGLPVYNAIVWQDRRTSEYCDELIKQGKANIISSKTGLIINPYFSGTKIRWILKNVPEAAQKLQEHKLLAGTIDTWLIWKLTDGKVHATDVTNASRTMLYNINTLEWDQEILDLLEIPREILPVVKSSSELYGTINPKYLSQRATAAVPIMGVAGDQQSSLFGQLCTEPGMVKNTYGTGCFTLINTGERAIFSKNKLVTTIAWKLGNQKPIYALEGSVFIAGSGIKWLRDSIKVIYNAQECDFYCGLADQEPQNVYMVPSFTGLGAPYWDSSSRGAIFGLERGTKREHIVKATIEAIAFQSNDLLSAMQKDIGKKINIMKVDGGASNSNYLMQFQSSISDVTIMRPTNIETTALGAAYLAGSASGFWKSIDELKKLNPIDKSFRPGLSKEVVNKKLKGWQEAVKRTFNWTNSI</sequence>